<feature type="chain" id="PRO_1000144615" description="Large ribosomal subunit protein uL23">
    <location>
        <begin position="1"/>
        <end position="97"/>
    </location>
</feature>
<evidence type="ECO:0000255" key="1">
    <source>
        <dbReference type="HAMAP-Rule" id="MF_01369"/>
    </source>
</evidence>
<evidence type="ECO:0000305" key="2"/>
<gene>
    <name evidence="1" type="primary">rplW</name>
    <name type="ordered locus">Teth39_0376</name>
</gene>
<comment type="function">
    <text evidence="1">One of the early assembly proteins it binds 23S rRNA. One of the proteins that surrounds the polypeptide exit tunnel on the outside of the ribosome. Forms the main docking site for trigger factor binding to the ribosome.</text>
</comment>
<comment type="subunit">
    <text evidence="1">Part of the 50S ribosomal subunit. Contacts protein L29, and trigger factor when it is bound to the ribosome.</text>
</comment>
<comment type="similarity">
    <text evidence="1">Belongs to the universal ribosomal protein uL23 family.</text>
</comment>
<reference key="1">
    <citation type="submission" date="2008-01" db="EMBL/GenBank/DDBJ databases">
        <title>Complete sequence of Thermoanaerobacter pseudethanolicus 39E.</title>
        <authorList>
            <person name="Copeland A."/>
            <person name="Lucas S."/>
            <person name="Lapidus A."/>
            <person name="Barry K."/>
            <person name="Glavina del Rio T."/>
            <person name="Dalin E."/>
            <person name="Tice H."/>
            <person name="Pitluck S."/>
            <person name="Bruce D."/>
            <person name="Goodwin L."/>
            <person name="Saunders E."/>
            <person name="Brettin T."/>
            <person name="Detter J.C."/>
            <person name="Han C."/>
            <person name="Schmutz J."/>
            <person name="Larimer F."/>
            <person name="Land M."/>
            <person name="Hauser L."/>
            <person name="Kyrpides N."/>
            <person name="Lykidis A."/>
            <person name="Hemme C."/>
            <person name="Fields M.W."/>
            <person name="He Z."/>
            <person name="Zhou J."/>
            <person name="Richardson P."/>
        </authorList>
    </citation>
    <scope>NUCLEOTIDE SEQUENCE [LARGE SCALE GENOMIC DNA]</scope>
    <source>
        <strain>ATCC 33223 / DSM 2355 / 39E</strain>
    </source>
</reference>
<protein>
    <recommendedName>
        <fullName evidence="1">Large ribosomal subunit protein uL23</fullName>
    </recommendedName>
    <alternativeName>
        <fullName evidence="2">50S ribosomal protein L23</fullName>
    </alternativeName>
</protein>
<keyword id="KW-1185">Reference proteome</keyword>
<keyword id="KW-0687">Ribonucleoprotein</keyword>
<keyword id="KW-0689">Ribosomal protein</keyword>
<keyword id="KW-0694">RNA-binding</keyword>
<keyword id="KW-0699">rRNA-binding</keyword>
<organism>
    <name type="scientific">Thermoanaerobacter pseudethanolicus (strain ATCC 33223 / 39E)</name>
    <name type="common">Clostridium thermohydrosulfuricum</name>
    <dbReference type="NCBI Taxonomy" id="340099"/>
    <lineage>
        <taxon>Bacteria</taxon>
        <taxon>Bacillati</taxon>
        <taxon>Bacillota</taxon>
        <taxon>Clostridia</taxon>
        <taxon>Thermoanaerobacterales</taxon>
        <taxon>Thermoanaerobacteraceae</taxon>
        <taxon>Thermoanaerobacter</taxon>
    </lineage>
</organism>
<dbReference type="EMBL" id="CP000924">
    <property type="protein sequence ID" value="ABY94045.1"/>
    <property type="molecule type" value="Genomic_DNA"/>
</dbReference>
<dbReference type="RefSeq" id="WP_003868562.1">
    <property type="nucleotide sequence ID" value="NC_010321.1"/>
</dbReference>
<dbReference type="SMR" id="B0KCK2"/>
<dbReference type="STRING" id="340099.Teth39_0376"/>
<dbReference type="KEGG" id="tpd:Teth39_0376"/>
<dbReference type="eggNOG" id="COG0089">
    <property type="taxonomic scope" value="Bacteria"/>
</dbReference>
<dbReference type="HOGENOM" id="CLU_037562_3_2_9"/>
<dbReference type="Proteomes" id="UP000002156">
    <property type="component" value="Chromosome"/>
</dbReference>
<dbReference type="GO" id="GO:1990904">
    <property type="term" value="C:ribonucleoprotein complex"/>
    <property type="evidence" value="ECO:0007669"/>
    <property type="project" value="UniProtKB-KW"/>
</dbReference>
<dbReference type="GO" id="GO:0005840">
    <property type="term" value="C:ribosome"/>
    <property type="evidence" value="ECO:0007669"/>
    <property type="project" value="UniProtKB-KW"/>
</dbReference>
<dbReference type="GO" id="GO:0019843">
    <property type="term" value="F:rRNA binding"/>
    <property type="evidence" value="ECO:0007669"/>
    <property type="project" value="UniProtKB-UniRule"/>
</dbReference>
<dbReference type="GO" id="GO:0003735">
    <property type="term" value="F:structural constituent of ribosome"/>
    <property type="evidence" value="ECO:0007669"/>
    <property type="project" value="InterPro"/>
</dbReference>
<dbReference type="GO" id="GO:0006412">
    <property type="term" value="P:translation"/>
    <property type="evidence" value="ECO:0007669"/>
    <property type="project" value="UniProtKB-UniRule"/>
</dbReference>
<dbReference type="FunFam" id="3.30.70.330:FF:000001">
    <property type="entry name" value="50S ribosomal protein L23"/>
    <property type="match status" value="1"/>
</dbReference>
<dbReference type="Gene3D" id="3.30.70.330">
    <property type="match status" value="1"/>
</dbReference>
<dbReference type="HAMAP" id="MF_01369_B">
    <property type="entry name" value="Ribosomal_uL23_B"/>
    <property type="match status" value="1"/>
</dbReference>
<dbReference type="InterPro" id="IPR012677">
    <property type="entry name" value="Nucleotide-bd_a/b_plait_sf"/>
</dbReference>
<dbReference type="InterPro" id="IPR013025">
    <property type="entry name" value="Ribosomal_uL23-like"/>
</dbReference>
<dbReference type="InterPro" id="IPR012678">
    <property type="entry name" value="Ribosomal_uL23/eL15/eS24_sf"/>
</dbReference>
<dbReference type="InterPro" id="IPR001014">
    <property type="entry name" value="Ribosomal_uL23_CS"/>
</dbReference>
<dbReference type="NCBIfam" id="NF004363">
    <property type="entry name" value="PRK05738.2-4"/>
    <property type="match status" value="1"/>
</dbReference>
<dbReference type="PANTHER" id="PTHR11620">
    <property type="entry name" value="60S RIBOSOMAL PROTEIN L23A"/>
    <property type="match status" value="1"/>
</dbReference>
<dbReference type="Pfam" id="PF00276">
    <property type="entry name" value="Ribosomal_L23"/>
    <property type="match status" value="1"/>
</dbReference>
<dbReference type="SUPFAM" id="SSF54189">
    <property type="entry name" value="Ribosomal proteins S24e, L23 and L15e"/>
    <property type="match status" value="1"/>
</dbReference>
<dbReference type="PROSITE" id="PS00050">
    <property type="entry name" value="RIBOSOMAL_L23"/>
    <property type="match status" value="1"/>
</dbReference>
<name>RL23_THEP3</name>
<proteinExistence type="inferred from homology"/>
<sequence>MEARDIIIRPVITEKSMNLMSERKYTFIVDKRANKIQIKKAVEDIFGVKVDKVYTMNYKGKPKRMGKYEGRTEAYKKAIVKLTPDSKGIEFFEGLQA</sequence>
<accession>B0KCK2</accession>